<sequence length="956" mass="105976">MEVTCLLLLALIPFHCRGQGVYAPAQAQIVHAGQACVVKEDNISERVYTIRESDTLVLQCLVTGHPRPQVRWTKTAGSASDKFQETSVFNETLRIERIARTQGGRYYCKAENGVGVPAIKSIRVDVQYLDEPVLTVHQTVSDVRGNFYQEKTVFLRCTVSSNPPARFIWKRGSDTLSHSQDNGVDIYEPLYTQGETKVLKLKNLRPQDYASYTCQVSVRNVCGIPDKSITFQLTNTTAPPTLKLSVNETLVVNPGENVTVQCLLTGGDPLPQLHWSHGPGPLPLGALAQGGTLSIPSVQARDSGYYNCTATNNVGNPAKKTVNLLVRSLKNATFQITPDMIKESENIQLGQDLKLSCHVDAVPQEKVNYQWFKNGKPARTSKRLLVTRNDPELPAVTSSLELIDLHFSDYGTYLCVASFPGSPVPDLSVEVNISSETVPPTISVPKGRAVVTVREGSPAELQCEVRGKPRPPVLWSRVDKEAALLPSGLALEETPDGKLRVERVSREMSGTYRCQTARYNGFNVRAREAQVQLTVHFPPEVEPSSQDVRQALGRPVLLRCSLLRGSPQRIASAVWRFKGQLLPPPPVLPAAAAEGPDHAELRLDALTRDSSGNYECSVSNDVGSATCLFQVSAKAYSPEFYFDTPNPTRSHKLSKNYSYVLQWTQREPDAVDPVLNYRLSIRQLNQHNAMVKAIPVRRVEKGQLLEYTLTDLRVPHSYEIHLTPYTTFGAGDMASRVIHYTEPINSPSLSDNTCHFEDEKICGYTQDLTDNFDWTRQNALTQNPKRSPNTGPPTDISGTPEGYYMFIETSRPRELGDRARLVSPLYNASAKFYCVSFFYHMYGKHIGSLNLLVRSRNKGTLDTHAWSLSGNKGNVWQQAHVPINPSGPFQIIFEGVRGSGYLGDIAIDDVTLKKGECPRRQMDPNKVVVMPGSGAPRLSSLQLWGSMTIFLLALQR</sequence>
<keyword id="KW-1003">Cell membrane</keyword>
<keyword id="KW-0217">Developmental protein</keyword>
<keyword id="KW-0221">Differentiation</keyword>
<keyword id="KW-1015">Disulfide bond</keyword>
<keyword id="KW-0325">Glycoprotein</keyword>
<keyword id="KW-0336">GPI-anchor</keyword>
<keyword id="KW-0393">Immunoglobulin domain</keyword>
<keyword id="KW-0449">Lipoprotein</keyword>
<keyword id="KW-0472">Membrane</keyword>
<keyword id="KW-0524">Neurogenesis</keyword>
<keyword id="KW-1185">Reference proteome</keyword>
<keyword id="KW-0677">Repeat</keyword>
<keyword id="KW-0732">Signal</keyword>
<comment type="function">
    <text evidence="1 9 10">Required for radial migration of cortical neurons in the superficial layer of the neocortex (By similarity). Plays a role in the formation or maintenance of inhibitory synapses. May function by inhibiting the activity of NLGN2.</text>
</comment>
<comment type="subunit">
    <text evidence="1 10">Interacts heterophilically through its MAM domain with proteins in axon-rich regions and through its Ig-like domains with proteins in differentiating muscle (By similarity). Interacts (through the Ig-like domains) with NLGN2.</text>
</comment>
<comment type="subcellular location">
    <subcellularLocation>
        <location evidence="8">Cell membrane</location>
        <topology evidence="8">Lipid-anchor</topology>
        <topology evidence="8">GPI-anchor</topology>
    </subcellularLocation>
    <text evidence="2 8">Associated with lipid rafts.</text>
</comment>
<comment type="tissue specificity">
    <text evidence="8 9">High levels detected in developing central and peripheral nervous systems with little expression elsewhere. In brain, highest levels in cerebral cortex and hindbrain at E15. At postnatal day 1, highest levels in basilar pons and superficial layers of the neocortex. In the developing spinal cord, restricted to a subpopulation of neurons in the dorsal and spinal ventral cord, probably D1 interneurons. Expressed in brain.</text>
</comment>
<accession>P85171</accession>
<organism>
    <name type="scientific">Rattus norvegicus</name>
    <name type="common">Rat</name>
    <dbReference type="NCBI Taxonomy" id="10116"/>
    <lineage>
        <taxon>Eukaryota</taxon>
        <taxon>Metazoa</taxon>
        <taxon>Chordata</taxon>
        <taxon>Craniata</taxon>
        <taxon>Vertebrata</taxon>
        <taxon>Euteleostomi</taxon>
        <taxon>Mammalia</taxon>
        <taxon>Eutheria</taxon>
        <taxon>Euarchontoglires</taxon>
        <taxon>Glires</taxon>
        <taxon>Rodentia</taxon>
        <taxon>Myomorpha</taxon>
        <taxon>Muroidea</taxon>
        <taxon>Muridae</taxon>
        <taxon>Murinae</taxon>
        <taxon>Rattus</taxon>
    </lineage>
</organism>
<dbReference type="RefSeq" id="NP_001401873.1">
    <property type="nucleotide sequence ID" value="NM_001414944.1"/>
</dbReference>
<dbReference type="RefSeq" id="XP_006256269.1">
    <property type="nucleotide sequence ID" value="XM_006256207.3"/>
</dbReference>
<dbReference type="SMR" id="P85171"/>
<dbReference type="FunCoup" id="P85171">
    <property type="interactions" value="852"/>
</dbReference>
<dbReference type="STRING" id="10116.ENSRNOP00000040424"/>
<dbReference type="GlyCosmos" id="P85171">
    <property type="glycosylation" value="4 sites, No reported glycans"/>
</dbReference>
<dbReference type="GlyGen" id="P85171">
    <property type="glycosylation" value="4 sites"/>
</dbReference>
<dbReference type="PhosphoSitePlus" id="P85171"/>
<dbReference type="PaxDb" id="10116-ENSRNOP00000040424"/>
<dbReference type="GeneID" id="309659"/>
<dbReference type="UCSC" id="RGD:1307031">
    <property type="organism name" value="rat"/>
</dbReference>
<dbReference type="AGR" id="RGD:1307031"/>
<dbReference type="RGD" id="1307031">
    <property type="gene designation" value="Mdga1"/>
</dbReference>
<dbReference type="eggNOG" id="ENOG502QUWH">
    <property type="taxonomic scope" value="Eukaryota"/>
</dbReference>
<dbReference type="HOGENOM" id="CLU_014908_0_0_1"/>
<dbReference type="InParanoid" id="P85171"/>
<dbReference type="PhylomeDB" id="P85171"/>
<dbReference type="Reactome" id="R-RNO-163125">
    <property type="pathway name" value="Post-translational modification: synthesis of GPI-anchored proteins"/>
</dbReference>
<dbReference type="PRO" id="PR:P85171"/>
<dbReference type="Proteomes" id="UP000002494">
    <property type="component" value="Unplaced"/>
</dbReference>
<dbReference type="GO" id="GO:0030424">
    <property type="term" value="C:axon"/>
    <property type="evidence" value="ECO:0000266"/>
    <property type="project" value="RGD"/>
</dbReference>
<dbReference type="GO" id="GO:0009986">
    <property type="term" value="C:cell surface"/>
    <property type="evidence" value="ECO:0000266"/>
    <property type="project" value="RGD"/>
</dbReference>
<dbReference type="GO" id="GO:0030425">
    <property type="term" value="C:dendrite"/>
    <property type="evidence" value="ECO:0000266"/>
    <property type="project" value="RGD"/>
</dbReference>
<dbReference type="GO" id="GO:0098982">
    <property type="term" value="C:GABA-ergic synapse"/>
    <property type="evidence" value="ECO:0000314"/>
    <property type="project" value="SynGO"/>
</dbReference>
<dbReference type="GO" id="GO:0098978">
    <property type="term" value="C:glutamatergic synapse"/>
    <property type="evidence" value="ECO:0000314"/>
    <property type="project" value="SynGO"/>
</dbReference>
<dbReference type="GO" id="GO:0005794">
    <property type="term" value="C:Golgi apparatus"/>
    <property type="evidence" value="ECO:0000318"/>
    <property type="project" value="GO_Central"/>
</dbReference>
<dbReference type="GO" id="GO:0005886">
    <property type="term" value="C:plasma membrane"/>
    <property type="evidence" value="ECO:0000314"/>
    <property type="project" value="UniProtKB"/>
</dbReference>
<dbReference type="GO" id="GO:0098839">
    <property type="term" value="C:postsynaptic density membrane"/>
    <property type="evidence" value="ECO:0000314"/>
    <property type="project" value="SynGO"/>
</dbReference>
<dbReference type="GO" id="GO:0098552">
    <property type="term" value="C:side of membrane"/>
    <property type="evidence" value="ECO:0007669"/>
    <property type="project" value="UniProtKB-KW"/>
</dbReference>
<dbReference type="GO" id="GO:0007420">
    <property type="term" value="P:brain development"/>
    <property type="evidence" value="ECO:0000270"/>
    <property type="project" value="HGNC-UCL"/>
</dbReference>
<dbReference type="GO" id="GO:0021799">
    <property type="term" value="P:cerebral cortex radially oriented cell migration"/>
    <property type="evidence" value="ECO:0000266"/>
    <property type="project" value="RGD"/>
</dbReference>
<dbReference type="GO" id="GO:1904862">
    <property type="term" value="P:inhibitory synapse assembly"/>
    <property type="evidence" value="ECO:0000266"/>
    <property type="project" value="RGD"/>
</dbReference>
<dbReference type="GO" id="GO:0051964">
    <property type="term" value="P:negative regulation of synapse assembly"/>
    <property type="evidence" value="ECO:0000314"/>
    <property type="project" value="RGD"/>
</dbReference>
<dbReference type="GO" id="GO:0001764">
    <property type="term" value="P:neuron migration"/>
    <property type="evidence" value="ECO:0000250"/>
    <property type="project" value="UniProtKB"/>
</dbReference>
<dbReference type="GO" id="GO:0099054">
    <property type="term" value="P:presynapse assembly"/>
    <property type="evidence" value="ECO:0000266"/>
    <property type="project" value="RGD"/>
</dbReference>
<dbReference type="GO" id="GO:1905606">
    <property type="term" value="P:regulation of presynapse assembly"/>
    <property type="evidence" value="ECO:0000266"/>
    <property type="project" value="RGD"/>
</dbReference>
<dbReference type="GO" id="GO:0090128">
    <property type="term" value="P:regulation of synapse maturation"/>
    <property type="evidence" value="ECO:0000314"/>
    <property type="project" value="SynGO"/>
</dbReference>
<dbReference type="GO" id="GO:0099179">
    <property type="term" value="P:regulation of synaptic membrane adhesion"/>
    <property type="evidence" value="ECO:0000266"/>
    <property type="project" value="RGD"/>
</dbReference>
<dbReference type="GO" id="GO:0021527">
    <property type="term" value="P:spinal cord association neuron differentiation"/>
    <property type="evidence" value="ECO:0000270"/>
    <property type="project" value="HGNC-UCL"/>
</dbReference>
<dbReference type="CDD" id="cd00096">
    <property type="entry name" value="Ig"/>
    <property type="match status" value="2"/>
</dbReference>
<dbReference type="CDD" id="cd06263">
    <property type="entry name" value="MAM"/>
    <property type="match status" value="1"/>
</dbReference>
<dbReference type="FunFam" id="2.60.40.10:FF:000240">
    <property type="entry name" value="MAM domain containing glycosylphosphatidylinositol anchor 1"/>
    <property type="match status" value="1"/>
</dbReference>
<dbReference type="FunFam" id="2.60.40.10:FF:000262">
    <property type="entry name" value="MAM domain containing glycosylphosphatidylinositol anchor 1"/>
    <property type="match status" value="1"/>
</dbReference>
<dbReference type="FunFam" id="2.60.40.10:FF:000303">
    <property type="entry name" value="MAM domain containing glycosylphosphatidylinositol anchor 1"/>
    <property type="match status" value="1"/>
</dbReference>
<dbReference type="FunFam" id="2.60.120.200:FF:000019">
    <property type="entry name" value="MAM domain containing glycosylphosphatidylinositol anchor 2"/>
    <property type="match status" value="1"/>
</dbReference>
<dbReference type="FunFam" id="2.60.40.10:FF:000165">
    <property type="entry name" value="MAM domain containing glycosylphosphatidylinositol anchor 2"/>
    <property type="match status" value="1"/>
</dbReference>
<dbReference type="FunFam" id="2.60.40.10:FF:000243">
    <property type="entry name" value="MAM domain-containing glycosylphosphatidylinositol anchor protein 1"/>
    <property type="match status" value="1"/>
</dbReference>
<dbReference type="FunFam" id="2.60.40.10:FF:001287">
    <property type="entry name" value="MAM domain-containing glycosylphosphatidylinositol anchor protein 1"/>
    <property type="match status" value="1"/>
</dbReference>
<dbReference type="Gene3D" id="2.60.120.200">
    <property type="match status" value="1"/>
</dbReference>
<dbReference type="Gene3D" id="2.60.40.10">
    <property type="entry name" value="Immunoglobulins"/>
    <property type="match status" value="7"/>
</dbReference>
<dbReference type="InterPro" id="IPR050958">
    <property type="entry name" value="Cell_Adh-Cytoskel_Orgn"/>
</dbReference>
<dbReference type="InterPro" id="IPR013320">
    <property type="entry name" value="ConA-like_dom_sf"/>
</dbReference>
<dbReference type="InterPro" id="IPR003961">
    <property type="entry name" value="FN3_dom"/>
</dbReference>
<dbReference type="InterPro" id="IPR036116">
    <property type="entry name" value="FN3_sf"/>
</dbReference>
<dbReference type="InterPro" id="IPR007110">
    <property type="entry name" value="Ig-like_dom"/>
</dbReference>
<dbReference type="InterPro" id="IPR036179">
    <property type="entry name" value="Ig-like_dom_sf"/>
</dbReference>
<dbReference type="InterPro" id="IPR013783">
    <property type="entry name" value="Ig-like_fold"/>
</dbReference>
<dbReference type="InterPro" id="IPR013098">
    <property type="entry name" value="Ig_I-set"/>
</dbReference>
<dbReference type="InterPro" id="IPR003599">
    <property type="entry name" value="Ig_sub"/>
</dbReference>
<dbReference type="InterPro" id="IPR003598">
    <property type="entry name" value="Ig_sub2"/>
</dbReference>
<dbReference type="InterPro" id="IPR000998">
    <property type="entry name" value="MAM_dom"/>
</dbReference>
<dbReference type="PANTHER" id="PTHR45080">
    <property type="entry name" value="CONTACTIN 5"/>
    <property type="match status" value="1"/>
</dbReference>
<dbReference type="PANTHER" id="PTHR45080:SF32">
    <property type="entry name" value="MAM DOMAIN CONTAINING GLYCOSYLPHOSPHATIDYLINOSITOL ANCHOR 1"/>
    <property type="match status" value="1"/>
</dbReference>
<dbReference type="Pfam" id="PF07679">
    <property type="entry name" value="I-set"/>
    <property type="match status" value="1"/>
</dbReference>
<dbReference type="Pfam" id="PF13927">
    <property type="entry name" value="Ig_3"/>
    <property type="match status" value="5"/>
</dbReference>
<dbReference type="Pfam" id="PF00629">
    <property type="entry name" value="MAM"/>
    <property type="match status" value="1"/>
</dbReference>
<dbReference type="SMART" id="SM00409">
    <property type="entry name" value="IG"/>
    <property type="match status" value="6"/>
</dbReference>
<dbReference type="SMART" id="SM00408">
    <property type="entry name" value="IGc2"/>
    <property type="match status" value="6"/>
</dbReference>
<dbReference type="SMART" id="SM00137">
    <property type="entry name" value="MAM"/>
    <property type="match status" value="1"/>
</dbReference>
<dbReference type="SUPFAM" id="SSF49899">
    <property type="entry name" value="Concanavalin A-like lectins/glucanases"/>
    <property type="match status" value="1"/>
</dbReference>
<dbReference type="SUPFAM" id="SSF49265">
    <property type="entry name" value="Fibronectin type III"/>
    <property type="match status" value="1"/>
</dbReference>
<dbReference type="SUPFAM" id="SSF48726">
    <property type="entry name" value="Immunoglobulin"/>
    <property type="match status" value="6"/>
</dbReference>
<dbReference type="PROSITE" id="PS50853">
    <property type="entry name" value="FN3"/>
    <property type="match status" value="1"/>
</dbReference>
<dbReference type="PROSITE" id="PS50835">
    <property type="entry name" value="IG_LIKE"/>
    <property type="match status" value="6"/>
</dbReference>
<dbReference type="PROSITE" id="PS50060">
    <property type="entry name" value="MAM_2"/>
    <property type="match status" value="1"/>
</dbReference>
<gene>
    <name type="primary">Mdga1</name>
</gene>
<name>MDGA1_RAT</name>
<reference evidence="11" key="1">
    <citation type="journal article" date="2004" name="Mol. Cell. Neurosci.">
        <title>Identification and characterization of two novel brain-derived immunoglobulin superfamily members with a unique structural organization.</title>
        <authorList>
            <person name="Litwack E.D."/>
            <person name="Babey R."/>
            <person name="Buser R."/>
            <person name="Gesemann M."/>
            <person name="O'Leary D.D.M."/>
        </authorList>
    </citation>
    <scope>NUCLEOTIDE SEQUENCE [MRNA]</scope>
    <scope>SUBCELLULAR LOCATION</scope>
    <scope>TISSUE SPECIFICITY</scope>
    <source>
        <tissue evidence="8">Pons</tissue>
    </source>
</reference>
<reference key="2">
    <citation type="journal article" date="2013" name="J. Cell Biol.">
        <title>Interaction between autism-linked MDGAs and neuroligins suppresses inhibitory synapse development.</title>
        <authorList>
            <person name="Pettem K.L."/>
            <person name="Yokomaku D."/>
            <person name="Takahashi H."/>
            <person name="Ge Y."/>
            <person name="Craig A.M."/>
        </authorList>
    </citation>
    <scope>FUNCTION</scope>
    <scope>INTERACTION WITH NLGN2</scope>
</reference>
<reference key="3">
    <citation type="journal article" date="2013" name="Proc. Natl. Acad. Sci. U.S.A.">
        <title>MDGAs interact selectively with neuroligin-2 but not other neuroligins to regulate inhibitory synapse development.</title>
        <authorList>
            <person name="Lee K."/>
            <person name="Kim Y."/>
            <person name="Lee S.-J."/>
            <person name="Qiang Y."/>
            <person name="Lee D."/>
            <person name="Lee H.W."/>
            <person name="Kim H."/>
            <person name="Je H.S."/>
            <person name="Suedhof T.C."/>
            <person name="Ko J."/>
        </authorList>
    </citation>
    <scope>FUNCTION</scope>
    <scope>TISSUE SPECIFICITY</scope>
</reference>
<protein>
    <recommendedName>
        <fullName>MAM domain-containing glycosylphosphatidylinositol anchor protein 1</fullName>
    </recommendedName>
    <alternativeName>
        <fullName>Ig6M</fullName>
    </alternativeName>
</protein>
<feature type="signal peptide" evidence="3">
    <location>
        <begin position="1"/>
        <end position="18"/>
    </location>
</feature>
<feature type="chain" id="PRO_0000292928" description="MAM domain-containing glycosylphosphatidylinositol anchor protein 1" evidence="3">
    <location>
        <begin position="19"/>
        <end position="933"/>
    </location>
</feature>
<feature type="propeptide" id="PRO_0000292929" description="Removed in mature form">
    <location>
        <begin position="934"/>
        <end position="956"/>
    </location>
</feature>
<feature type="domain" description="Ig-like 1" evidence="3">
    <location>
        <begin position="24"/>
        <end position="123"/>
    </location>
</feature>
<feature type="domain" description="Ig-like 2" evidence="3">
    <location>
        <begin position="132"/>
        <end position="230"/>
    </location>
</feature>
<feature type="domain" description="Ig-like 3" evidence="3">
    <location>
        <begin position="240"/>
        <end position="323"/>
    </location>
</feature>
<feature type="domain" description="Ig-like 4" evidence="3">
    <location>
        <begin position="338"/>
        <end position="432"/>
    </location>
</feature>
<feature type="domain" description="Ig-like 5" evidence="3">
    <location>
        <begin position="440"/>
        <end position="534"/>
    </location>
</feature>
<feature type="domain" description="Ig-like 6" evidence="3">
    <location>
        <begin position="539"/>
        <end position="632"/>
    </location>
</feature>
<feature type="domain" description="Fibronectin type-III" evidence="6">
    <location>
        <begin position="644"/>
        <end position="744"/>
    </location>
</feature>
<feature type="domain" description="MAM" evidence="5">
    <location>
        <begin position="752"/>
        <end position="919"/>
    </location>
</feature>
<feature type="region of interest" description="Disordered" evidence="7">
    <location>
        <begin position="780"/>
        <end position="799"/>
    </location>
</feature>
<feature type="compositionally biased region" description="Polar residues" evidence="7">
    <location>
        <begin position="780"/>
        <end position="789"/>
    </location>
</feature>
<feature type="lipid moiety-binding region" description="GPI-anchor amidated serine" evidence="3">
    <location>
        <position position="933"/>
    </location>
</feature>
<feature type="glycosylation site" description="N-linked (GlcNAc...) asparagine" evidence="3">
    <location>
        <position position="42"/>
    </location>
</feature>
<feature type="glycosylation site" description="N-linked (GlcNAc...) asparagine" evidence="3">
    <location>
        <position position="235"/>
    </location>
</feature>
<feature type="glycosylation site" description="N-linked (GlcNAc...) asparagine" evidence="3">
    <location>
        <position position="257"/>
    </location>
</feature>
<feature type="glycosylation site" description="N-linked (GlcNAc...) asparagine" evidence="3">
    <location>
        <position position="307"/>
    </location>
</feature>
<feature type="disulfide bond" evidence="4">
    <location>
        <begin position="60"/>
        <end position="108"/>
    </location>
</feature>
<feature type="disulfide bond" evidence="4">
    <location>
        <begin position="157"/>
        <end position="214"/>
    </location>
</feature>
<feature type="disulfide bond" evidence="4">
    <location>
        <begin position="262"/>
        <end position="308"/>
    </location>
</feature>
<feature type="disulfide bond" evidence="4">
    <location>
        <begin position="357"/>
        <end position="415"/>
    </location>
</feature>
<feature type="disulfide bond" evidence="4">
    <location>
        <begin position="463"/>
        <end position="514"/>
    </location>
</feature>
<feature type="disulfide bond" evidence="4">
    <location>
        <begin position="560"/>
        <end position="616"/>
    </location>
</feature>
<evidence type="ECO:0000250" key="1"/>
<evidence type="ECO:0000250" key="2">
    <source>
        <dbReference type="UniProtKB" id="Q8NFP4"/>
    </source>
</evidence>
<evidence type="ECO:0000255" key="3"/>
<evidence type="ECO:0000255" key="4">
    <source>
        <dbReference type="PROSITE-ProRule" id="PRU00114"/>
    </source>
</evidence>
<evidence type="ECO:0000255" key="5">
    <source>
        <dbReference type="PROSITE-ProRule" id="PRU00128"/>
    </source>
</evidence>
<evidence type="ECO:0000255" key="6">
    <source>
        <dbReference type="PROSITE-ProRule" id="PRU00316"/>
    </source>
</evidence>
<evidence type="ECO:0000256" key="7">
    <source>
        <dbReference type="SAM" id="MobiDB-lite"/>
    </source>
</evidence>
<evidence type="ECO:0000269" key="8">
    <source>
    </source>
</evidence>
<evidence type="ECO:0000269" key="9">
    <source>
    </source>
</evidence>
<evidence type="ECO:0000269" key="10">
    <source>
    </source>
</evidence>
<evidence type="ECO:0000305" key="11"/>
<proteinExistence type="evidence at protein level"/>